<evidence type="ECO:0000255" key="1">
    <source>
        <dbReference type="HAMAP-Rule" id="MF_00167"/>
    </source>
</evidence>
<comment type="function">
    <text evidence="1">A key translational regulator that binds mRNA to regulate translation initiation and/or mRNA stability. Mediates global changes in gene expression, shifting from rapid growth to stress survival by linking envelope stress, the stringent response and the catabolite repression systems. Usually binds in the 5'-UTR; binding at or near the Shine-Dalgarno sequence prevents ribosome-binding, repressing translation, binding elsewhere in the 5'-UTR can activate translation and/or stabilize the mRNA. Its function is antagonized by small RNA(s).</text>
</comment>
<comment type="subunit">
    <text evidence="1">Homodimer; the beta-strands of each monomer intercalate to form a hydrophobic core, while the alpha-helices form wings that extend away from the core.</text>
</comment>
<comment type="subcellular location">
    <subcellularLocation>
        <location evidence="1">Cytoplasm</location>
    </subcellularLocation>
</comment>
<comment type="similarity">
    <text evidence="1">Belongs to the CsrA/RsmA family.</text>
</comment>
<protein>
    <recommendedName>
        <fullName evidence="1">Translational regulator CsrA</fullName>
    </recommendedName>
    <alternativeName>
        <fullName evidence="1">Carbon storage regulator</fullName>
    </alternativeName>
</protein>
<accession>B2VHD3</accession>
<keyword id="KW-0010">Activator</keyword>
<keyword id="KW-0963">Cytoplasm</keyword>
<keyword id="KW-1185">Reference proteome</keyword>
<keyword id="KW-0678">Repressor</keyword>
<keyword id="KW-0694">RNA-binding</keyword>
<keyword id="KW-0810">Translation regulation</keyword>
<organism>
    <name type="scientific">Erwinia tasmaniensis (strain DSM 17950 / CFBP 7177 / CIP 109463 / NCPPB 4357 / Et1/99)</name>
    <dbReference type="NCBI Taxonomy" id="465817"/>
    <lineage>
        <taxon>Bacteria</taxon>
        <taxon>Pseudomonadati</taxon>
        <taxon>Pseudomonadota</taxon>
        <taxon>Gammaproteobacteria</taxon>
        <taxon>Enterobacterales</taxon>
        <taxon>Erwiniaceae</taxon>
        <taxon>Erwinia</taxon>
    </lineage>
</organism>
<proteinExistence type="inferred from homology"/>
<name>CSRA_ERWT9</name>
<sequence>MLILTRRVGETLMIGDEVTVTVLGVKGNQVRIGVNAPKEVSVHREEIYQRIQAEKTQQTSY</sequence>
<feature type="chain" id="PRO_1000097491" description="Translational regulator CsrA">
    <location>
        <begin position="1"/>
        <end position="61"/>
    </location>
</feature>
<dbReference type="EMBL" id="CU468135">
    <property type="protein sequence ID" value="CAO97711.1"/>
    <property type="molecule type" value="Genomic_DNA"/>
</dbReference>
<dbReference type="RefSeq" id="WP_004155916.1">
    <property type="nucleotide sequence ID" value="NC_010694.1"/>
</dbReference>
<dbReference type="SMR" id="B2VHD3"/>
<dbReference type="STRING" id="465817.ETA_26650"/>
<dbReference type="GeneID" id="97605128"/>
<dbReference type="KEGG" id="eta:ETA_26650"/>
<dbReference type="eggNOG" id="COG1551">
    <property type="taxonomic scope" value="Bacteria"/>
</dbReference>
<dbReference type="HOGENOM" id="CLU_164837_2_1_6"/>
<dbReference type="OrthoDB" id="9809061at2"/>
<dbReference type="Proteomes" id="UP000001726">
    <property type="component" value="Chromosome"/>
</dbReference>
<dbReference type="GO" id="GO:0005829">
    <property type="term" value="C:cytosol"/>
    <property type="evidence" value="ECO:0007669"/>
    <property type="project" value="TreeGrafter"/>
</dbReference>
<dbReference type="GO" id="GO:0048027">
    <property type="term" value="F:mRNA 5'-UTR binding"/>
    <property type="evidence" value="ECO:0007669"/>
    <property type="project" value="UniProtKB-UniRule"/>
</dbReference>
<dbReference type="GO" id="GO:0006402">
    <property type="term" value="P:mRNA catabolic process"/>
    <property type="evidence" value="ECO:0007669"/>
    <property type="project" value="InterPro"/>
</dbReference>
<dbReference type="GO" id="GO:0045947">
    <property type="term" value="P:negative regulation of translational initiation"/>
    <property type="evidence" value="ECO:0007669"/>
    <property type="project" value="UniProtKB-UniRule"/>
</dbReference>
<dbReference type="GO" id="GO:0045948">
    <property type="term" value="P:positive regulation of translational initiation"/>
    <property type="evidence" value="ECO:0007669"/>
    <property type="project" value="UniProtKB-UniRule"/>
</dbReference>
<dbReference type="GO" id="GO:0006109">
    <property type="term" value="P:regulation of carbohydrate metabolic process"/>
    <property type="evidence" value="ECO:0007669"/>
    <property type="project" value="UniProtKB-UniRule"/>
</dbReference>
<dbReference type="FunFam" id="2.60.40.4380:FF:000001">
    <property type="entry name" value="Translational regulator CsrA"/>
    <property type="match status" value="1"/>
</dbReference>
<dbReference type="Gene3D" id="2.60.40.4380">
    <property type="entry name" value="Translational regulator CsrA"/>
    <property type="match status" value="1"/>
</dbReference>
<dbReference type="HAMAP" id="MF_00167">
    <property type="entry name" value="CsrA"/>
    <property type="match status" value="1"/>
</dbReference>
<dbReference type="InterPro" id="IPR003751">
    <property type="entry name" value="CsrA"/>
</dbReference>
<dbReference type="InterPro" id="IPR036107">
    <property type="entry name" value="CsrA_sf"/>
</dbReference>
<dbReference type="NCBIfam" id="TIGR00202">
    <property type="entry name" value="csrA"/>
    <property type="match status" value="1"/>
</dbReference>
<dbReference type="NCBIfam" id="NF002469">
    <property type="entry name" value="PRK01712.1"/>
    <property type="match status" value="1"/>
</dbReference>
<dbReference type="PANTHER" id="PTHR34984">
    <property type="entry name" value="CARBON STORAGE REGULATOR"/>
    <property type="match status" value="1"/>
</dbReference>
<dbReference type="PANTHER" id="PTHR34984:SF1">
    <property type="entry name" value="CARBON STORAGE REGULATOR"/>
    <property type="match status" value="1"/>
</dbReference>
<dbReference type="Pfam" id="PF02599">
    <property type="entry name" value="CsrA"/>
    <property type="match status" value="1"/>
</dbReference>
<dbReference type="SUPFAM" id="SSF117130">
    <property type="entry name" value="CsrA-like"/>
    <property type="match status" value="1"/>
</dbReference>
<reference key="1">
    <citation type="journal article" date="2008" name="Environ. Microbiol.">
        <title>The genome of Erwinia tasmaniensis strain Et1/99, a non-pathogenic bacterium in the genus Erwinia.</title>
        <authorList>
            <person name="Kube M."/>
            <person name="Migdoll A.M."/>
            <person name="Mueller I."/>
            <person name="Kuhl H."/>
            <person name="Beck A."/>
            <person name="Reinhardt R."/>
            <person name="Geider K."/>
        </authorList>
    </citation>
    <scope>NUCLEOTIDE SEQUENCE [LARGE SCALE GENOMIC DNA]</scope>
    <source>
        <strain>DSM 17950 / CFBP 7177 / CIP 109463 / NCPPB 4357 / Et1/99</strain>
    </source>
</reference>
<gene>
    <name evidence="1" type="primary">csrA</name>
    <name type="ordered locus">ETA_26650</name>
</gene>